<protein>
    <recommendedName>
        <fullName evidence="1">Large ribosomal subunit protein bL17</fullName>
    </recommendedName>
    <alternativeName>
        <fullName evidence="2">50S ribosomal protein L17</fullName>
    </alternativeName>
</protein>
<comment type="subunit">
    <text evidence="1">Part of the 50S ribosomal subunit. Contacts protein L32.</text>
</comment>
<comment type="similarity">
    <text evidence="1">Belongs to the bacterial ribosomal protein bL17 family.</text>
</comment>
<accession>A0KF46</accession>
<proteinExistence type="inferred from homology"/>
<feature type="chain" id="PRO_1000055760" description="Large ribosomal subunit protein bL17">
    <location>
        <begin position="1"/>
        <end position="127"/>
    </location>
</feature>
<name>RL17_AERHH</name>
<reference key="1">
    <citation type="journal article" date="2006" name="J. Bacteriol.">
        <title>Genome sequence of Aeromonas hydrophila ATCC 7966T: jack of all trades.</title>
        <authorList>
            <person name="Seshadri R."/>
            <person name="Joseph S.W."/>
            <person name="Chopra A.K."/>
            <person name="Sha J."/>
            <person name="Shaw J."/>
            <person name="Graf J."/>
            <person name="Haft D.H."/>
            <person name="Wu M."/>
            <person name="Ren Q."/>
            <person name="Rosovitz M.J."/>
            <person name="Madupu R."/>
            <person name="Tallon L."/>
            <person name="Kim M."/>
            <person name="Jin S."/>
            <person name="Vuong H."/>
            <person name="Stine O.C."/>
            <person name="Ali A."/>
            <person name="Horneman A.J."/>
            <person name="Heidelberg J.F."/>
        </authorList>
    </citation>
    <scope>NUCLEOTIDE SEQUENCE [LARGE SCALE GENOMIC DNA]</scope>
    <source>
        <strain>ATCC 7966 / DSM 30187 / BCRC 13018 / CCUG 14551 / JCM 1027 / KCTC 2358 / NCIMB 9240 / NCTC 8049</strain>
    </source>
</reference>
<keyword id="KW-1185">Reference proteome</keyword>
<keyword id="KW-0687">Ribonucleoprotein</keyword>
<keyword id="KW-0689">Ribosomal protein</keyword>
<dbReference type="EMBL" id="CP000462">
    <property type="protein sequence ID" value="ABK35840.1"/>
    <property type="molecule type" value="Genomic_DNA"/>
</dbReference>
<dbReference type="RefSeq" id="WP_005307999.1">
    <property type="nucleotide sequence ID" value="NC_008570.1"/>
</dbReference>
<dbReference type="RefSeq" id="YP_854868.1">
    <property type="nucleotide sequence ID" value="NC_008570.1"/>
</dbReference>
<dbReference type="SMR" id="A0KF46"/>
<dbReference type="STRING" id="380703.AHA_0334"/>
<dbReference type="EnsemblBacteria" id="ABK35840">
    <property type="protein sequence ID" value="ABK35840"/>
    <property type="gene ID" value="AHA_0334"/>
</dbReference>
<dbReference type="GeneID" id="97858418"/>
<dbReference type="KEGG" id="aha:AHA_0334"/>
<dbReference type="PATRIC" id="fig|380703.7.peg.324"/>
<dbReference type="eggNOG" id="COG0203">
    <property type="taxonomic scope" value="Bacteria"/>
</dbReference>
<dbReference type="HOGENOM" id="CLU_074407_2_0_6"/>
<dbReference type="OrthoDB" id="9809073at2"/>
<dbReference type="PRO" id="PR:A0KF46"/>
<dbReference type="Proteomes" id="UP000000756">
    <property type="component" value="Chromosome"/>
</dbReference>
<dbReference type="GO" id="GO:0022625">
    <property type="term" value="C:cytosolic large ribosomal subunit"/>
    <property type="evidence" value="ECO:0007669"/>
    <property type="project" value="TreeGrafter"/>
</dbReference>
<dbReference type="GO" id="GO:0003735">
    <property type="term" value="F:structural constituent of ribosome"/>
    <property type="evidence" value="ECO:0007669"/>
    <property type="project" value="InterPro"/>
</dbReference>
<dbReference type="GO" id="GO:0006412">
    <property type="term" value="P:translation"/>
    <property type="evidence" value="ECO:0007669"/>
    <property type="project" value="UniProtKB-UniRule"/>
</dbReference>
<dbReference type="FunFam" id="3.90.1030.10:FF:000001">
    <property type="entry name" value="50S ribosomal protein L17"/>
    <property type="match status" value="1"/>
</dbReference>
<dbReference type="Gene3D" id="3.90.1030.10">
    <property type="entry name" value="Ribosomal protein L17"/>
    <property type="match status" value="1"/>
</dbReference>
<dbReference type="HAMAP" id="MF_01368">
    <property type="entry name" value="Ribosomal_bL17"/>
    <property type="match status" value="1"/>
</dbReference>
<dbReference type="InterPro" id="IPR000456">
    <property type="entry name" value="Ribosomal_bL17"/>
</dbReference>
<dbReference type="InterPro" id="IPR047859">
    <property type="entry name" value="Ribosomal_bL17_CS"/>
</dbReference>
<dbReference type="InterPro" id="IPR036373">
    <property type="entry name" value="Ribosomal_bL17_sf"/>
</dbReference>
<dbReference type="NCBIfam" id="TIGR00059">
    <property type="entry name" value="L17"/>
    <property type="match status" value="1"/>
</dbReference>
<dbReference type="PANTHER" id="PTHR14413:SF16">
    <property type="entry name" value="LARGE RIBOSOMAL SUBUNIT PROTEIN BL17M"/>
    <property type="match status" value="1"/>
</dbReference>
<dbReference type="PANTHER" id="PTHR14413">
    <property type="entry name" value="RIBOSOMAL PROTEIN L17"/>
    <property type="match status" value="1"/>
</dbReference>
<dbReference type="Pfam" id="PF01196">
    <property type="entry name" value="Ribosomal_L17"/>
    <property type="match status" value="1"/>
</dbReference>
<dbReference type="SUPFAM" id="SSF64263">
    <property type="entry name" value="Prokaryotic ribosomal protein L17"/>
    <property type="match status" value="1"/>
</dbReference>
<dbReference type="PROSITE" id="PS01167">
    <property type="entry name" value="RIBOSOMAL_L17"/>
    <property type="match status" value="1"/>
</dbReference>
<sequence>MRHRLSGRQLNRNSSHRQAMFRNMASSLVRHEIIKTTLPKAKELRRVVEPLITLAKTDSVANRRLAFARTRDNAIVAKLFNELGPRYLERAGGYTRILKCGFRAGDNAPMAYIELVDRPAAAEAAAE</sequence>
<evidence type="ECO:0000255" key="1">
    <source>
        <dbReference type="HAMAP-Rule" id="MF_01368"/>
    </source>
</evidence>
<evidence type="ECO:0000305" key="2"/>
<gene>
    <name evidence="1" type="primary">rplQ</name>
    <name type="ordered locus">AHA_0334</name>
</gene>
<organism>
    <name type="scientific">Aeromonas hydrophila subsp. hydrophila (strain ATCC 7966 / DSM 30187 / BCRC 13018 / CCUG 14551 / JCM 1027 / KCTC 2358 / NCIMB 9240 / NCTC 8049)</name>
    <dbReference type="NCBI Taxonomy" id="380703"/>
    <lineage>
        <taxon>Bacteria</taxon>
        <taxon>Pseudomonadati</taxon>
        <taxon>Pseudomonadota</taxon>
        <taxon>Gammaproteobacteria</taxon>
        <taxon>Aeromonadales</taxon>
        <taxon>Aeromonadaceae</taxon>
        <taxon>Aeromonas</taxon>
    </lineage>
</organism>